<feature type="chain" id="PRO_0000164024" description="Metallothiol transferase FosB">
    <location>
        <begin position="1"/>
        <end position="138"/>
    </location>
</feature>
<feature type="domain" description="VOC" evidence="2">
    <location>
        <begin position="4"/>
        <end position="119"/>
    </location>
</feature>
<feature type="active site" description="Proton donor/acceptor" evidence="2">
    <location>
        <position position="115"/>
    </location>
</feature>
<feature type="binding site" evidence="1">
    <location>
        <position position="7"/>
    </location>
    <ligand>
        <name>Mg(2+)</name>
        <dbReference type="ChEBI" id="CHEBI:18420"/>
    </ligand>
</feature>
<feature type="binding site" evidence="1">
    <location>
        <position position="66"/>
    </location>
    <ligand>
        <name>Mg(2+)</name>
        <dbReference type="ChEBI" id="CHEBI:18420"/>
    </ligand>
</feature>
<feature type="binding site" evidence="1">
    <location>
        <position position="115"/>
    </location>
    <ligand>
        <name>Mg(2+)</name>
        <dbReference type="ChEBI" id="CHEBI:18420"/>
    </ligand>
</feature>
<sequence>MIQSINHICFSVANLEKAIEFYQNILQAKLLVKGRKLAYFDLNGLWIALNVEESIPRNEIQYSYTHIAFTVTNNEFDSLKEILIQNQVNILPGRERDDRDKRSIYFTDPDGHKFEFHTGTLQDRLQYYKEDKKYMTFY</sequence>
<dbReference type="EC" id="2.5.1.-" evidence="1"/>
<dbReference type="EMBL" id="AJ605334">
    <property type="protein sequence ID" value="CAE53427.1"/>
    <property type="molecule type" value="Genomic_DNA"/>
</dbReference>
<dbReference type="RefSeq" id="WP_063851229.1">
    <property type="nucleotide sequence ID" value="NG_047887.1"/>
</dbReference>
<dbReference type="SMR" id="P60865"/>
<dbReference type="GO" id="GO:0005737">
    <property type="term" value="C:cytoplasm"/>
    <property type="evidence" value="ECO:0007669"/>
    <property type="project" value="UniProtKB-SubCell"/>
</dbReference>
<dbReference type="GO" id="GO:0000287">
    <property type="term" value="F:magnesium ion binding"/>
    <property type="evidence" value="ECO:0007669"/>
    <property type="project" value="UniProtKB-UniRule"/>
</dbReference>
<dbReference type="GO" id="GO:0016765">
    <property type="term" value="F:transferase activity, transferring alkyl or aryl (other than methyl) groups"/>
    <property type="evidence" value="ECO:0007669"/>
    <property type="project" value="UniProtKB-UniRule"/>
</dbReference>
<dbReference type="GO" id="GO:0046677">
    <property type="term" value="P:response to antibiotic"/>
    <property type="evidence" value="ECO:0007669"/>
    <property type="project" value="UniProtKB-UniRule"/>
</dbReference>
<dbReference type="CDD" id="cd08363">
    <property type="entry name" value="FosB"/>
    <property type="match status" value="1"/>
</dbReference>
<dbReference type="Gene3D" id="3.10.180.10">
    <property type="entry name" value="2,3-Dihydroxybiphenyl 1,2-Dioxygenase, domain 1"/>
    <property type="match status" value="1"/>
</dbReference>
<dbReference type="HAMAP" id="MF_01512">
    <property type="entry name" value="FosB"/>
    <property type="match status" value="1"/>
</dbReference>
<dbReference type="InterPro" id="IPR051332">
    <property type="entry name" value="Fosfomycin_Res_Enzymes"/>
</dbReference>
<dbReference type="InterPro" id="IPR029068">
    <property type="entry name" value="Glyas_Bleomycin-R_OHBP_Dase"/>
</dbReference>
<dbReference type="InterPro" id="IPR004360">
    <property type="entry name" value="Glyas_Fos-R_dOase_dom"/>
</dbReference>
<dbReference type="InterPro" id="IPR022858">
    <property type="entry name" value="Metallothiol_Trafse_FosB"/>
</dbReference>
<dbReference type="InterPro" id="IPR037523">
    <property type="entry name" value="VOC"/>
</dbReference>
<dbReference type="NCBIfam" id="NF000493">
    <property type="entry name" value="Fos_BSH"/>
    <property type="match status" value="1"/>
</dbReference>
<dbReference type="NCBIfam" id="NF000098">
    <property type="entry name" value="Fos_BSH_Bcer"/>
    <property type="match status" value="1"/>
</dbReference>
<dbReference type="NCBIfam" id="NF003152">
    <property type="entry name" value="PRK04101.1"/>
    <property type="match status" value="1"/>
</dbReference>
<dbReference type="PANTHER" id="PTHR36113:SF6">
    <property type="entry name" value="FOSFOMYCIN RESISTANCE PROTEIN FOSX"/>
    <property type="match status" value="1"/>
</dbReference>
<dbReference type="PANTHER" id="PTHR36113">
    <property type="entry name" value="LYASE, PUTATIVE-RELATED-RELATED"/>
    <property type="match status" value="1"/>
</dbReference>
<dbReference type="Pfam" id="PF00903">
    <property type="entry name" value="Glyoxalase"/>
    <property type="match status" value="1"/>
</dbReference>
<dbReference type="SUPFAM" id="SSF54593">
    <property type="entry name" value="Glyoxalase/Bleomycin resistance protein/Dihydroxybiphenyl dioxygenase"/>
    <property type="match status" value="1"/>
</dbReference>
<dbReference type="PROSITE" id="PS51819">
    <property type="entry name" value="VOC"/>
    <property type="match status" value="1"/>
</dbReference>
<accession>P60865</accession>
<reference key="1">
    <citation type="submission" date="2003-10" db="EMBL/GenBank/DDBJ databases">
        <title>IS231-MIC231 mobile elements from Bacillus cereus are, in essence, modular.</title>
        <authorList>
            <person name="De Palmenaer D."/>
            <person name="Vermeiren C."/>
            <person name="Chen Y."/>
            <person name="Mahillon J."/>
        </authorList>
    </citation>
    <scope>NUCLEOTIDE SEQUENCE [GENOMIC DNA]</scope>
    <source>
        <strain>As4-12</strain>
    </source>
</reference>
<keyword id="KW-0046">Antibiotic resistance</keyword>
<keyword id="KW-0963">Cytoplasm</keyword>
<keyword id="KW-0460">Magnesium</keyword>
<keyword id="KW-0479">Metal-binding</keyword>
<keyword id="KW-0808">Transferase</keyword>
<protein>
    <recommendedName>
        <fullName evidence="1">Metallothiol transferase FosB</fullName>
        <ecNumber evidence="1">2.5.1.-</ecNumber>
    </recommendedName>
    <alternativeName>
        <fullName evidence="1">Fosfomycin resistance protein</fullName>
    </alternativeName>
</protein>
<evidence type="ECO:0000255" key="1">
    <source>
        <dbReference type="HAMAP-Rule" id="MF_01512"/>
    </source>
</evidence>
<evidence type="ECO:0000255" key="2">
    <source>
        <dbReference type="PROSITE-ProRule" id="PRU01163"/>
    </source>
</evidence>
<gene>
    <name evidence="1" type="primary">fosB</name>
</gene>
<comment type="function">
    <text evidence="1">Metallothiol transferase which confers resistance to fosfomycin by catalyzing the addition of a thiol cofactor to fosfomycin. L-cysteine is probably the physiological thiol donor.</text>
</comment>
<comment type="cofactor">
    <cofactor evidence="1">
        <name>Mg(2+)</name>
        <dbReference type="ChEBI" id="CHEBI:18420"/>
    </cofactor>
</comment>
<comment type="subunit">
    <text evidence="1">Homodimer.</text>
</comment>
<comment type="subcellular location">
    <subcellularLocation>
        <location evidence="1">Cytoplasm</location>
    </subcellularLocation>
</comment>
<comment type="similarity">
    <text evidence="1">Belongs to the fosfomycin resistance protein family. FosB subfamily.</text>
</comment>
<proteinExistence type="inferred from homology"/>
<organism>
    <name type="scientific">Bacillus cereus</name>
    <dbReference type="NCBI Taxonomy" id="1396"/>
    <lineage>
        <taxon>Bacteria</taxon>
        <taxon>Bacillati</taxon>
        <taxon>Bacillota</taxon>
        <taxon>Bacilli</taxon>
        <taxon>Bacillales</taxon>
        <taxon>Bacillaceae</taxon>
        <taxon>Bacillus</taxon>
        <taxon>Bacillus cereus group</taxon>
    </lineage>
</organism>
<name>FOSB_BACCE</name>